<comment type="subcellular location">
    <subcellularLocation>
        <location evidence="1">Nucleus</location>
        <location evidence="1">Nucleolus</location>
    </subcellularLocation>
</comment>
<comment type="miscellaneous">
    <text evidence="2">Present with 2820 molecules/cell in log phase SD medium.</text>
</comment>
<comment type="similarity">
    <text evidence="3">Belongs to the class IV-like SAM-binding methyltransferase superfamily.</text>
</comment>
<proteinExistence type="evidence at protein level"/>
<dbReference type="EC" id="2.1.1.-" evidence="3"/>
<dbReference type="EMBL" id="Z73068">
    <property type="protein sequence ID" value="CAA97314.1"/>
    <property type="molecule type" value="Genomic_DNA"/>
</dbReference>
<dbReference type="EMBL" id="BK006941">
    <property type="protein sequence ID" value="DAA08371.1"/>
    <property type="molecule type" value="Genomic_DNA"/>
</dbReference>
<dbReference type="PIR" id="S64618">
    <property type="entry name" value="S64618"/>
</dbReference>
<dbReference type="SMR" id="P53336"/>
<dbReference type="BioGRID" id="33533">
    <property type="interactions" value="119"/>
</dbReference>
<dbReference type="DIP" id="DIP-5565N"/>
<dbReference type="FunCoup" id="P53336">
    <property type="interactions" value="867"/>
</dbReference>
<dbReference type="IntAct" id="P53336">
    <property type="interactions" value="15"/>
</dbReference>
<dbReference type="MINT" id="P53336"/>
<dbReference type="STRING" id="4932.YGR283C"/>
<dbReference type="GlyGen" id="P53336">
    <property type="glycosylation" value="1 site"/>
</dbReference>
<dbReference type="iPTMnet" id="P53336"/>
<dbReference type="PaxDb" id="4932-YGR283C"/>
<dbReference type="PeptideAtlas" id="P53336"/>
<dbReference type="EnsemblFungi" id="YGR283C_mRNA">
    <property type="protein sequence ID" value="YGR283C"/>
    <property type="gene ID" value="YGR283C"/>
</dbReference>
<dbReference type="KEGG" id="sce:YGR283C"/>
<dbReference type="AGR" id="SGD:S000003515"/>
<dbReference type="SGD" id="S000003515">
    <property type="gene designation" value="YGR283C"/>
</dbReference>
<dbReference type="VEuPathDB" id="FungiDB:YGR283C"/>
<dbReference type="eggNOG" id="KOG3925">
    <property type="taxonomic scope" value="Eukaryota"/>
</dbReference>
<dbReference type="GeneTree" id="ENSGT00390000016537"/>
<dbReference type="HOGENOM" id="CLU_061859_0_0_1"/>
<dbReference type="InParanoid" id="P53336"/>
<dbReference type="OMA" id="YLKCAST"/>
<dbReference type="OrthoDB" id="361029at2759"/>
<dbReference type="BioCyc" id="YEAST:G3O-30945-MONOMER"/>
<dbReference type="BioGRID-ORCS" id="853200">
    <property type="hits" value="1 hit in 10 CRISPR screens"/>
</dbReference>
<dbReference type="PRO" id="PR:P53336"/>
<dbReference type="Proteomes" id="UP000002311">
    <property type="component" value="Chromosome VII"/>
</dbReference>
<dbReference type="RNAct" id="P53336">
    <property type="molecule type" value="protein"/>
</dbReference>
<dbReference type="GO" id="GO:0005730">
    <property type="term" value="C:nucleolus"/>
    <property type="evidence" value="ECO:0007005"/>
    <property type="project" value="SGD"/>
</dbReference>
<dbReference type="GO" id="GO:0008168">
    <property type="term" value="F:methyltransferase activity"/>
    <property type="evidence" value="ECO:0000250"/>
    <property type="project" value="SGD"/>
</dbReference>
<dbReference type="GO" id="GO:0032259">
    <property type="term" value="P:methylation"/>
    <property type="evidence" value="ECO:0000305"/>
    <property type="project" value="SGD"/>
</dbReference>
<dbReference type="CDD" id="cd18086">
    <property type="entry name" value="HsC9orf114-like"/>
    <property type="match status" value="1"/>
</dbReference>
<dbReference type="FunFam" id="3.40.1280.10:FF:000040">
    <property type="entry name" value="YMR310C-like protein"/>
    <property type="match status" value="1"/>
</dbReference>
<dbReference type="Gene3D" id="3.40.1280.10">
    <property type="match status" value="2"/>
</dbReference>
<dbReference type="InterPro" id="IPR029028">
    <property type="entry name" value="Alpha/beta_knot_MTases"/>
</dbReference>
<dbReference type="InterPro" id="IPR003750">
    <property type="entry name" value="Put_MeTrfase-C9orf114-like"/>
</dbReference>
<dbReference type="InterPro" id="IPR029026">
    <property type="entry name" value="tRNA_m1G_MTases_N"/>
</dbReference>
<dbReference type="PANTHER" id="PTHR12150">
    <property type="entry name" value="CLASS IV SAM-BINDING METHYLTRANSFERASE-RELATED"/>
    <property type="match status" value="1"/>
</dbReference>
<dbReference type="PANTHER" id="PTHR12150:SF13">
    <property type="entry name" value="METHYLTRANSFERASE C9ORF114-RELATED"/>
    <property type="match status" value="1"/>
</dbReference>
<dbReference type="Pfam" id="PF02598">
    <property type="entry name" value="Methyltrn_RNA_3"/>
    <property type="match status" value="1"/>
</dbReference>
<dbReference type="SUPFAM" id="SSF75217">
    <property type="entry name" value="alpha/beta knot"/>
    <property type="match status" value="1"/>
</dbReference>
<evidence type="ECO:0000269" key="1">
    <source>
    </source>
</evidence>
<evidence type="ECO:0000269" key="2">
    <source>
    </source>
</evidence>
<evidence type="ECO:0000305" key="3"/>
<evidence type="ECO:0000312" key="4">
    <source>
        <dbReference type="SGD" id="S000003515"/>
    </source>
</evidence>
<sequence>MAVKHKSESLKHEEGAAKKAKTGLLKLKKIMDIESNVVKYSICIPTTVIDNCNNLEQVTFTAYQIARTAVLFNVQEIIVLDQSKDKKHEKKSRSKETISDCLLLATLLQYFVTPPNLLDTTFKKKNKLYLKCASTFPPLNQLPFMNASAEQHYKEGLSIARDSSKGKSDDALTNLVYIGKNQIITLSNQNIPNTARVTVDTERKEVVSPIDAYKGKPLGYHVRMASTLNEVSEGYTKIVWVNSGDFHYDEELSKYHKVETKLPYIAKLKKSSTSEKPCNILLIFGKWGHLKRCFRRSDLESSSLHHYFSGQLQFPASVPQGNIPIQDSLPIALTMFQRWAS</sequence>
<protein>
    <recommendedName>
        <fullName evidence="3">Putative methyltransferase YGR283C</fullName>
        <ecNumber evidence="3">2.1.1.-</ecNumber>
    </recommendedName>
</protein>
<organism>
    <name type="scientific">Saccharomyces cerevisiae (strain ATCC 204508 / S288c)</name>
    <name type="common">Baker's yeast</name>
    <dbReference type="NCBI Taxonomy" id="559292"/>
    <lineage>
        <taxon>Eukaryota</taxon>
        <taxon>Fungi</taxon>
        <taxon>Dikarya</taxon>
        <taxon>Ascomycota</taxon>
        <taxon>Saccharomycotina</taxon>
        <taxon>Saccharomycetes</taxon>
        <taxon>Saccharomycetales</taxon>
        <taxon>Saccharomycetaceae</taxon>
        <taxon>Saccharomyces</taxon>
    </lineage>
</organism>
<reference key="1">
    <citation type="journal article" date="1997" name="Yeast">
        <title>Sequence analysis of a near-subtelomeric 35.4 kb DNA segment on the right arm of chromosome VII from Saccharomyces cerevisiae carrying the MAL1 locus reveals 15 complete open reading frames, including ZUO1, BGL2 and BIO2 genes and an ABC transporter gene.</title>
        <authorList>
            <person name="Volckaert G."/>
            <person name="Voet M."/>
            <person name="Robben J."/>
        </authorList>
    </citation>
    <scope>NUCLEOTIDE SEQUENCE [GENOMIC DNA]</scope>
    <source>
        <strain>ATCC 96604 / S288c / FY1679</strain>
    </source>
</reference>
<reference key="2">
    <citation type="journal article" date="1997" name="Nature">
        <title>The nucleotide sequence of Saccharomyces cerevisiae chromosome VII.</title>
        <authorList>
            <person name="Tettelin H."/>
            <person name="Agostoni-Carbone M.L."/>
            <person name="Albermann K."/>
            <person name="Albers M."/>
            <person name="Arroyo J."/>
            <person name="Backes U."/>
            <person name="Barreiros T."/>
            <person name="Bertani I."/>
            <person name="Bjourson A.J."/>
            <person name="Brueckner M."/>
            <person name="Bruschi C.V."/>
            <person name="Carignani G."/>
            <person name="Castagnoli L."/>
            <person name="Cerdan E."/>
            <person name="Clemente M.L."/>
            <person name="Coblenz A."/>
            <person name="Coglievina M."/>
            <person name="Coissac E."/>
            <person name="Defoor E."/>
            <person name="Del Bino S."/>
            <person name="Delius H."/>
            <person name="Delneri D."/>
            <person name="de Wergifosse P."/>
            <person name="Dujon B."/>
            <person name="Durand P."/>
            <person name="Entian K.-D."/>
            <person name="Eraso P."/>
            <person name="Escribano V."/>
            <person name="Fabiani L."/>
            <person name="Fartmann B."/>
            <person name="Feroli F."/>
            <person name="Feuermann M."/>
            <person name="Frontali L."/>
            <person name="Garcia-Gonzalez M."/>
            <person name="Garcia-Saez M.I."/>
            <person name="Goffeau A."/>
            <person name="Guerreiro P."/>
            <person name="Hani J."/>
            <person name="Hansen M."/>
            <person name="Hebling U."/>
            <person name="Hernandez K."/>
            <person name="Heumann K."/>
            <person name="Hilger F."/>
            <person name="Hofmann B."/>
            <person name="Indge K.J."/>
            <person name="James C.M."/>
            <person name="Klima R."/>
            <person name="Koetter P."/>
            <person name="Kramer B."/>
            <person name="Kramer W."/>
            <person name="Lauquin G."/>
            <person name="Leuther H."/>
            <person name="Louis E.J."/>
            <person name="Maillier E."/>
            <person name="Marconi A."/>
            <person name="Martegani E."/>
            <person name="Mazon M.J."/>
            <person name="Mazzoni C."/>
            <person name="McReynolds A.D.K."/>
            <person name="Melchioretto P."/>
            <person name="Mewes H.-W."/>
            <person name="Minenkova O."/>
            <person name="Mueller-Auer S."/>
            <person name="Nawrocki A."/>
            <person name="Netter P."/>
            <person name="Neu R."/>
            <person name="Nombela C."/>
            <person name="Oliver S.G."/>
            <person name="Panzeri L."/>
            <person name="Paoluzi S."/>
            <person name="Plevani P."/>
            <person name="Portetelle D."/>
            <person name="Portillo F."/>
            <person name="Potier S."/>
            <person name="Purnelle B."/>
            <person name="Rieger M."/>
            <person name="Riles L."/>
            <person name="Rinaldi T."/>
            <person name="Robben J."/>
            <person name="Rodrigues-Pousada C."/>
            <person name="Rodriguez-Belmonte E."/>
            <person name="Rodriguez-Torres A.M."/>
            <person name="Rose M."/>
            <person name="Ruzzi M."/>
            <person name="Saliola M."/>
            <person name="Sanchez-Perez M."/>
            <person name="Schaefer B."/>
            <person name="Schaefer M."/>
            <person name="Scharfe M."/>
            <person name="Schmidheini T."/>
            <person name="Schreer A."/>
            <person name="Skala J."/>
            <person name="Souciet J.-L."/>
            <person name="Steensma H.Y."/>
            <person name="Talla E."/>
            <person name="Thierry A."/>
            <person name="Vandenbol M."/>
            <person name="van der Aart Q.J.M."/>
            <person name="Van Dyck L."/>
            <person name="Vanoni M."/>
            <person name="Verhasselt P."/>
            <person name="Voet M."/>
            <person name="Volckaert G."/>
            <person name="Wambutt R."/>
            <person name="Watson M.D."/>
            <person name="Weber N."/>
            <person name="Wedler E."/>
            <person name="Wedler H."/>
            <person name="Wipfli P."/>
            <person name="Wolf K."/>
            <person name="Wright L.F."/>
            <person name="Zaccaria P."/>
            <person name="Zimmermann M."/>
            <person name="Zollner A."/>
            <person name="Kleine K."/>
        </authorList>
    </citation>
    <scope>NUCLEOTIDE SEQUENCE [LARGE SCALE GENOMIC DNA]</scope>
    <source>
        <strain>ATCC 204508 / S288c</strain>
    </source>
</reference>
<reference key="3">
    <citation type="journal article" date="2014" name="G3 (Bethesda)">
        <title>The reference genome sequence of Saccharomyces cerevisiae: Then and now.</title>
        <authorList>
            <person name="Engel S.R."/>
            <person name="Dietrich F.S."/>
            <person name="Fisk D.G."/>
            <person name="Binkley G."/>
            <person name="Balakrishnan R."/>
            <person name="Costanzo M.C."/>
            <person name="Dwight S.S."/>
            <person name="Hitz B.C."/>
            <person name="Karra K."/>
            <person name="Nash R.S."/>
            <person name="Weng S."/>
            <person name="Wong E.D."/>
            <person name="Lloyd P."/>
            <person name="Skrzypek M.S."/>
            <person name="Miyasato S.R."/>
            <person name="Simison M."/>
            <person name="Cherry J.M."/>
        </authorList>
    </citation>
    <scope>GENOME REANNOTATION</scope>
    <source>
        <strain>ATCC 204508 / S288c</strain>
    </source>
</reference>
<reference key="4">
    <citation type="journal article" date="2003" name="Nature">
        <title>Global analysis of protein localization in budding yeast.</title>
        <authorList>
            <person name="Huh W.-K."/>
            <person name="Falvo J.V."/>
            <person name="Gerke L.C."/>
            <person name="Carroll A.S."/>
            <person name="Howson R.W."/>
            <person name="Weissman J.S."/>
            <person name="O'Shea E.K."/>
        </authorList>
    </citation>
    <scope>SUBCELLULAR LOCATION [LARGE SCALE ANALYSIS]</scope>
</reference>
<reference key="5">
    <citation type="journal article" date="2003" name="Nature">
        <title>Global analysis of protein expression in yeast.</title>
        <authorList>
            <person name="Ghaemmaghami S."/>
            <person name="Huh W.-K."/>
            <person name="Bower K."/>
            <person name="Howson R.W."/>
            <person name="Belle A."/>
            <person name="Dephoure N."/>
            <person name="O'Shea E.K."/>
            <person name="Weissman J.S."/>
        </authorList>
    </citation>
    <scope>LEVEL OF PROTEIN EXPRESSION [LARGE SCALE ANALYSIS]</scope>
</reference>
<keyword id="KW-0489">Methyltransferase</keyword>
<keyword id="KW-0539">Nucleus</keyword>
<keyword id="KW-1185">Reference proteome</keyword>
<keyword id="KW-0808">Transferase</keyword>
<name>YG5X_YEAST</name>
<gene>
    <name evidence="4" type="ordered locus">YGR283C</name>
</gene>
<accession>P53336</accession>
<accession>D6VV60</accession>
<feature type="chain" id="PRO_0000202872" description="Putative methyltransferase YGR283C">
    <location>
        <begin position="1"/>
        <end position="341"/>
    </location>
</feature>